<name>LUC7_SCHPO</name>
<sequence length="264" mass="30937">MAAEQRKIIEQLMGSNLSNFTSRGLVHFTDRKVCRSFLCGICPHDIFTNTKMDLGPCPKIHSDKLKSDYERASYSHDYGYEWDYLEDLERHVDDCNKRIDIAEARREKTKEEEERIDELMRDIIHTDHSIEVIITEMEALAKRKLVNDAVKHFIELNRLKTYRKELYDEVISMNEIPSQASTTHQKLQVCDICSAYLSRLDNDRRLADHFSGKMHLGYAMLRNIARDLRAQLEDREKSRDKKDGEKQRDNLASFEDKISTSFVA</sequence>
<keyword id="KW-0175">Coiled coil</keyword>
<keyword id="KW-0963">Cytoplasm</keyword>
<keyword id="KW-0507">mRNA processing</keyword>
<keyword id="KW-0508">mRNA splicing</keyword>
<keyword id="KW-0539">Nucleus</keyword>
<keyword id="KW-1185">Reference proteome</keyword>
<keyword id="KW-0687">Ribonucleoprotein</keyword>
<keyword id="KW-0747">Spliceosome</keyword>
<comment type="function">
    <text evidence="4">Component of the U1 snRNP particle, which recognizes and binds the 5'-splice site of pre-mRNA. Together with other non-snRNP factors, U1 snRNP forms the spliceosomal commitment complex, that targets pre-mRNA to the splicing pathway.</text>
</comment>
<comment type="subunit">
    <text evidence="4">Component of the U1 snRNP particle, a subcomplex of the spliceosome.</text>
</comment>
<comment type="subcellular location">
    <subcellularLocation>
        <location evidence="3">Cytoplasm</location>
    </subcellularLocation>
    <subcellularLocation>
        <location evidence="3">Nucleus</location>
    </subcellularLocation>
</comment>
<comment type="similarity">
    <text evidence="5">Belongs to the Luc7 family.</text>
</comment>
<reference key="1">
    <citation type="journal article" date="2002" name="Nature">
        <title>The genome sequence of Schizosaccharomyces pombe.</title>
        <authorList>
            <person name="Wood V."/>
            <person name="Gwilliam R."/>
            <person name="Rajandream M.A."/>
            <person name="Lyne M.H."/>
            <person name="Lyne R."/>
            <person name="Stewart A."/>
            <person name="Sgouros J.G."/>
            <person name="Peat N."/>
            <person name="Hayles J."/>
            <person name="Baker S.G."/>
            <person name="Basham D."/>
            <person name="Bowman S."/>
            <person name="Brooks K."/>
            <person name="Brown D."/>
            <person name="Brown S."/>
            <person name="Chillingworth T."/>
            <person name="Churcher C.M."/>
            <person name="Collins M."/>
            <person name="Connor R."/>
            <person name="Cronin A."/>
            <person name="Davis P."/>
            <person name="Feltwell T."/>
            <person name="Fraser A."/>
            <person name="Gentles S."/>
            <person name="Goble A."/>
            <person name="Hamlin N."/>
            <person name="Harris D.E."/>
            <person name="Hidalgo J."/>
            <person name="Hodgson G."/>
            <person name="Holroyd S."/>
            <person name="Hornsby T."/>
            <person name="Howarth S."/>
            <person name="Huckle E.J."/>
            <person name="Hunt S."/>
            <person name="Jagels K."/>
            <person name="James K.D."/>
            <person name="Jones L."/>
            <person name="Jones M."/>
            <person name="Leather S."/>
            <person name="McDonald S."/>
            <person name="McLean J."/>
            <person name="Mooney P."/>
            <person name="Moule S."/>
            <person name="Mungall K.L."/>
            <person name="Murphy L.D."/>
            <person name="Niblett D."/>
            <person name="Odell C."/>
            <person name="Oliver K."/>
            <person name="O'Neil S."/>
            <person name="Pearson D."/>
            <person name="Quail M.A."/>
            <person name="Rabbinowitsch E."/>
            <person name="Rutherford K.M."/>
            <person name="Rutter S."/>
            <person name="Saunders D."/>
            <person name="Seeger K."/>
            <person name="Sharp S."/>
            <person name="Skelton J."/>
            <person name="Simmonds M.N."/>
            <person name="Squares R."/>
            <person name="Squares S."/>
            <person name="Stevens K."/>
            <person name="Taylor K."/>
            <person name="Taylor R.G."/>
            <person name="Tivey A."/>
            <person name="Walsh S.V."/>
            <person name="Warren T."/>
            <person name="Whitehead S."/>
            <person name="Woodward J.R."/>
            <person name="Volckaert G."/>
            <person name="Aert R."/>
            <person name="Robben J."/>
            <person name="Grymonprez B."/>
            <person name="Weltjens I."/>
            <person name="Vanstreels E."/>
            <person name="Rieger M."/>
            <person name="Schaefer M."/>
            <person name="Mueller-Auer S."/>
            <person name="Gabel C."/>
            <person name="Fuchs M."/>
            <person name="Duesterhoeft A."/>
            <person name="Fritzc C."/>
            <person name="Holzer E."/>
            <person name="Moestl D."/>
            <person name="Hilbert H."/>
            <person name="Borzym K."/>
            <person name="Langer I."/>
            <person name="Beck A."/>
            <person name="Lehrach H."/>
            <person name="Reinhardt R."/>
            <person name="Pohl T.M."/>
            <person name="Eger P."/>
            <person name="Zimmermann W."/>
            <person name="Wedler H."/>
            <person name="Wambutt R."/>
            <person name="Purnelle B."/>
            <person name="Goffeau A."/>
            <person name="Cadieu E."/>
            <person name="Dreano S."/>
            <person name="Gloux S."/>
            <person name="Lelaure V."/>
            <person name="Mottier S."/>
            <person name="Galibert F."/>
            <person name="Aves S.J."/>
            <person name="Xiang Z."/>
            <person name="Hunt C."/>
            <person name="Moore K."/>
            <person name="Hurst S.M."/>
            <person name="Lucas M."/>
            <person name="Rochet M."/>
            <person name="Gaillardin C."/>
            <person name="Tallada V.A."/>
            <person name="Garzon A."/>
            <person name="Thode G."/>
            <person name="Daga R.R."/>
            <person name="Cruzado L."/>
            <person name="Jimenez J."/>
            <person name="Sanchez M."/>
            <person name="del Rey F."/>
            <person name="Benito J."/>
            <person name="Dominguez A."/>
            <person name="Revuelta J.L."/>
            <person name="Moreno S."/>
            <person name="Armstrong J."/>
            <person name="Forsburg S.L."/>
            <person name="Cerutti L."/>
            <person name="Lowe T."/>
            <person name="McCombie W.R."/>
            <person name="Paulsen I."/>
            <person name="Potashkin J."/>
            <person name="Shpakovski G.V."/>
            <person name="Ussery D."/>
            <person name="Barrell B.G."/>
            <person name="Nurse P."/>
        </authorList>
    </citation>
    <scope>NUCLEOTIDE SEQUENCE [LARGE SCALE GENOMIC DNA]</scope>
    <source>
        <strain>972 / ATCC 24843</strain>
    </source>
</reference>
<reference key="2">
    <citation type="journal article" date="2006" name="Nat. Biotechnol.">
        <title>ORFeome cloning and global analysis of protein localization in the fission yeast Schizosaccharomyces pombe.</title>
        <authorList>
            <person name="Matsuyama A."/>
            <person name="Arai R."/>
            <person name="Yashiroda Y."/>
            <person name="Shirai A."/>
            <person name="Kamata A."/>
            <person name="Sekido S."/>
            <person name="Kobayashi Y."/>
            <person name="Hashimoto A."/>
            <person name="Hamamoto M."/>
            <person name="Hiraoka Y."/>
            <person name="Horinouchi S."/>
            <person name="Yoshida M."/>
        </authorList>
    </citation>
    <scope>SUBCELLULAR LOCATION [LARGE SCALE ANALYSIS]</scope>
</reference>
<reference key="3">
    <citation type="journal article" date="2007" name="Nucleic Acids Res.">
        <title>Proteomic analysis of the U1 snRNP of Schizosaccharomyces pombe reveals three essential organism-specific proteins.</title>
        <authorList>
            <person name="Newo A.N.S."/>
            <person name="Luetzelberger M."/>
            <person name="Bottner C.A."/>
            <person name="Wehland J."/>
            <person name="Wissing J."/>
            <person name="Jaensch L."/>
            <person name="Kaeufer N.F."/>
        </authorList>
    </citation>
    <scope>IDENTIFICATION IN THE U1 SNRNP COMPLEX</scope>
    <scope>FUNCTION</scope>
</reference>
<evidence type="ECO:0000255" key="1"/>
<evidence type="ECO:0000256" key="2">
    <source>
        <dbReference type="SAM" id="MobiDB-lite"/>
    </source>
</evidence>
<evidence type="ECO:0000269" key="3">
    <source>
    </source>
</evidence>
<evidence type="ECO:0000269" key="4">
    <source>
    </source>
</evidence>
<evidence type="ECO:0000305" key="5"/>
<feature type="chain" id="PRO_0000362156" description="U1 snRNP-associated protein usp106">
    <location>
        <begin position="1"/>
        <end position="264"/>
    </location>
</feature>
<feature type="region of interest" description="Disordered" evidence="2">
    <location>
        <begin position="233"/>
        <end position="264"/>
    </location>
</feature>
<feature type="coiled-coil region" evidence="1">
    <location>
        <begin position="83"/>
        <end position="126"/>
    </location>
</feature>
<feature type="compositionally biased region" description="Basic and acidic residues" evidence="2">
    <location>
        <begin position="233"/>
        <end position="258"/>
    </location>
</feature>
<proteinExistence type="evidence at protein level"/>
<protein>
    <recommendedName>
        <fullName>U1 snRNP-associated protein usp106</fullName>
    </recommendedName>
    <alternativeName>
        <fullName>Protein luc7</fullName>
    </alternativeName>
</protein>
<gene>
    <name type="primary">usp106</name>
    <name type="synonym">luc7</name>
    <name type="ORF">SPCC16A11.13</name>
</gene>
<organism>
    <name type="scientific">Schizosaccharomyces pombe (strain 972 / ATCC 24843)</name>
    <name type="common">Fission yeast</name>
    <dbReference type="NCBI Taxonomy" id="284812"/>
    <lineage>
        <taxon>Eukaryota</taxon>
        <taxon>Fungi</taxon>
        <taxon>Dikarya</taxon>
        <taxon>Ascomycota</taxon>
        <taxon>Taphrinomycotina</taxon>
        <taxon>Schizosaccharomycetes</taxon>
        <taxon>Schizosaccharomycetales</taxon>
        <taxon>Schizosaccharomycetaceae</taxon>
        <taxon>Schizosaccharomyces</taxon>
    </lineage>
</organism>
<dbReference type="EMBL" id="CU329672">
    <property type="protein sequence ID" value="CAB53085.1"/>
    <property type="molecule type" value="Genomic_DNA"/>
</dbReference>
<dbReference type="PIR" id="T41086">
    <property type="entry name" value="T41086"/>
</dbReference>
<dbReference type="RefSeq" id="NP_588000.1">
    <property type="nucleotide sequence ID" value="NM_001022991.2"/>
</dbReference>
<dbReference type="SMR" id="Q9USM4"/>
<dbReference type="BioGRID" id="275628">
    <property type="interactions" value="16"/>
</dbReference>
<dbReference type="FunCoup" id="Q9USM4">
    <property type="interactions" value="579"/>
</dbReference>
<dbReference type="IntAct" id="Q9USM4">
    <property type="interactions" value="1"/>
</dbReference>
<dbReference type="STRING" id="284812.Q9USM4"/>
<dbReference type="iPTMnet" id="Q9USM4"/>
<dbReference type="PaxDb" id="4896-SPCC16A11.13.1"/>
<dbReference type="EnsemblFungi" id="SPCC16A11.13.1">
    <property type="protein sequence ID" value="SPCC16A11.13.1:pep"/>
    <property type="gene ID" value="SPCC16A11.13"/>
</dbReference>
<dbReference type="GeneID" id="2539055"/>
<dbReference type="KEGG" id="spo:2539055"/>
<dbReference type="PomBase" id="SPCC16A11.13"/>
<dbReference type="VEuPathDB" id="FungiDB:SPCC16A11.13"/>
<dbReference type="eggNOG" id="KOG0796">
    <property type="taxonomic scope" value="Eukaryota"/>
</dbReference>
<dbReference type="HOGENOM" id="CLU_030397_1_0_1"/>
<dbReference type="InParanoid" id="Q9USM4"/>
<dbReference type="OMA" id="CPYDLFQ"/>
<dbReference type="PhylomeDB" id="Q9USM4"/>
<dbReference type="PRO" id="PR:Q9USM4"/>
<dbReference type="Proteomes" id="UP000002485">
    <property type="component" value="Chromosome III"/>
</dbReference>
<dbReference type="GO" id="GO:0005829">
    <property type="term" value="C:cytosol"/>
    <property type="evidence" value="ECO:0007005"/>
    <property type="project" value="PomBase"/>
</dbReference>
<dbReference type="GO" id="GO:0005634">
    <property type="term" value="C:nucleus"/>
    <property type="evidence" value="ECO:0007005"/>
    <property type="project" value="PomBase"/>
</dbReference>
<dbReference type="GO" id="GO:0005685">
    <property type="term" value="C:U1 snRNP"/>
    <property type="evidence" value="ECO:0000314"/>
    <property type="project" value="PomBase"/>
</dbReference>
<dbReference type="GO" id="GO:0071004">
    <property type="term" value="C:U2-type prespliceosome"/>
    <property type="evidence" value="ECO:0000318"/>
    <property type="project" value="GO_Central"/>
</dbReference>
<dbReference type="GO" id="GO:0003729">
    <property type="term" value="F:mRNA binding"/>
    <property type="evidence" value="ECO:0000318"/>
    <property type="project" value="GO_Central"/>
</dbReference>
<dbReference type="GO" id="GO:0000395">
    <property type="term" value="P:mRNA 5'-splice site recognition"/>
    <property type="evidence" value="ECO:0000305"/>
    <property type="project" value="PomBase"/>
</dbReference>
<dbReference type="GO" id="GO:0045292">
    <property type="term" value="P:mRNA cis splicing, via spliceosome"/>
    <property type="evidence" value="ECO:0000269"/>
    <property type="project" value="PomBase"/>
</dbReference>
<dbReference type="GO" id="GO:0006376">
    <property type="term" value="P:mRNA splice site recognition"/>
    <property type="evidence" value="ECO:0000318"/>
    <property type="project" value="GO_Central"/>
</dbReference>
<dbReference type="InterPro" id="IPR004882">
    <property type="entry name" value="Luc7-rel"/>
</dbReference>
<dbReference type="PANTHER" id="PTHR12375">
    <property type="entry name" value="RNA-BINDING PROTEIN LUC7-RELATED"/>
    <property type="match status" value="1"/>
</dbReference>
<dbReference type="Pfam" id="PF03194">
    <property type="entry name" value="LUC7"/>
    <property type="match status" value="1"/>
</dbReference>
<accession>Q9USM4</accession>